<proteinExistence type="inferred from homology"/>
<comment type="catalytic activity">
    <reaction evidence="1">
        <text>thymidine + ATP = dTMP + ADP + H(+)</text>
        <dbReference type="Rhea" id="RHEA:19129"/>
        <dbReference type="ChEBI" id="CHEBI:15378"/>
        <dbReference type="ChEBI" id="CHEBI:17748"/>
        <dbReference type="ChEBI" id="CHEBI:30616"/>
        <dbReference type="ChEBI" id="CHEBI:63528"/>
        <dbReference type="ChEBI" id="CHEBI:456216"/>
        <dbReference type="EC" id="2.7.1.21"/>
    </reaction>
</comment>
<comment type="subunit">
    <text evidence="1">Homotetramer.</text>
</comment>
<comment type="subcellular location">
    <subcellularLocation>
        <location evidence="1">Cytoplasm</location>
    </subcellularLocation>
</comment>
<comment type="similarity">
    <text evidence="1">Belongs to the thymidine kinase family.</text>
</comment>
<accession>Q9HPQ9</accession>
<organism>
    <name type="scientific">Halobacterium salinarum (strain ATCC 700922 / JCM 11081 / NRC-1)</name>
    <name type="common">Halobacterium halobium</name>
    <dbReference type="NCBI Taxonomy" id="64091"/>
    <lineage>
        <taxon>Archaea</taxon>
        <taxon>Methanobacteriati</taxon>
        <taxon>Methanobacteriota</taxon>
        <taxon>Stenosarchaea group</taxon>
        <taxon>Halobacteria</taxon>
        <taxon>Halobacteriales</taxon>
        <taxon>Halobacteriaceae</taxon>
        <taxon>Halobacterium</taxon>
        <taxon>Halobacterium salinarum NRC-34001</taxon>
    </lineage>
</organism>
<dbReference type="EC" id="2.7.1.21" evidence="1"/>
<dbReference type="EMBL" id="AE004437">
    <property type="protein sequence ID" value="AAG19808.1"/>
    <property type="molecule type" value="Genomic_DNA"/>
</dbReference>
<dbReference type="PIR" id="D84305">
    <property type="entry name" value="D84305"/>
</dbReference>
<dbReference type="RefSeq" id="WP_010903105.1">
    <property type="nucleotide sequence ID" value="NC_002607.1"/>
</dbReference>
<dbReference type="SMR" id="Q9HPQ9"/>
<dbReference type="STRING" id="64091.VNG_1515G"/>
<dbReference type="PaxDb" id="64091-VNG_1515G"/>
<dbReference type="KEGG" id="hal:VNG_1515G"/>
<dbReference type="PATRIC" id="fig|64091.14.peg.1158"/>
<dbReference type="HOGENOM" id="CLU_064400_3_0_2"/>
<dbReference type="InParanoid" id="Q9HPQ9"/>
<dbReference type="OrthoDB" id="372131at2157"/>
<dbReference type="PhylomeDB" id="Q9HPQ9"/>
<dbReference type="Proteomes" id="UP000000554">
    <property type="component" value="Chromosome"/>
</dbReference>
<dbReference type="GO" id="GO:0005737">
    <property type="term" value="C:cytoplasm"/>
    <property type="evidence" value="ECO:0007669"/>
    <property type="project" value="UniProtKB-SubCell"/>
</dbReference>
<dbReference type="GO" id="GO:0005524">
    <property type="term" value="F:ATP binding"/>
    <property type="evidence" value="ECO:0007669"/>
    <property type="project" value="UniProtKB-UniRule"/>
</dbReference>
<dbReference type="GO" id="GO:0004797">
    <property type="term" value="F:thymidine kinase activity"/>
    <property type="evidence" value="ECO:0000318"/>
    <property type="project" value="GO_Central"/>
</dbReference>
<dbReference type="GO" id="GO:0008270">
    <property type="term" value="F:zinc ion binding"/>
    <property type="evidence" value="ECO:0007669"/>
    <property type="project" value="UniProtKB-UniRule"/>
</dbReference>
<dbReference type="GO" id="GO:0071897">
    <property type="term" value="P:DNA biosynthetic process"/>
    <property type="evidence" value="ECO:0007669"/>
    <property type="project" value="UniProtKB-KW"/>
</dbReference>
<dbReference type="GO" id="GO:0046104">
    <property type="term" value="P:thymidine metabolic process"/>
    <property type="evidence" value="ECO:0000318"/>
    <property type="project" value="GO_Central"/>
</dbReference>
<dbReference type="FunFam" id="3.30.60.20:FF:000026">
    <property type="entry name" value="Thymidine kinase"/>
    <property type="match status" value="1"/>
</dbReference>
<dbReference type="Gene3D" id="3.30.60.20">
    <property type="match status" value="1"/>
</dbReference>
<dbReference type="Gene3D" id="3.40.50.300">
    <property type="entry name" value="P-loop containing nucleotide triphosphate hydrolases"/>
    <property type="match status" value="1"/>
</dbReference>
<dbReference type="HAMAP" id="MF_00124">
    <property type="entry name" value="Thymidine_kinase"/>
    <property type="match status" value="1"/>
</dbReference>
<dbReference type="InterPro" id="IPR027417">
    <property type="entry name" value="P-loop_NTPase"/>
</dbReference>
<dbReference type="InterPro" id="IPR001267">
    <property type="entry name" value="Thymidine_kinase"/>
</dbReference>
<dbReference type="InterPro" id="IPR020633">
    <property type="entry name" value="Thymidine_kinase_CS"/>
</dbReference>
<dbReference type="NCBIfam" id="NF003296">
    <property type="entry name" value="PRK04296.1-1"/>
    <property type="match status" value="1"/>
</dbReference>
<dbReference type="PANTHER" id="PTHR11441">
    <property type="entry name" value="THYMIDINE KINASE"/>
    <property type="match status" value="1"/>
</dbReference>
<dbReference type="PANTHER" id="PTHR11441:SF0">
    <property type="entry name" value="THYMIDINE KINASE, CYTOSOLIC"/>
    <property type="match status" value="1"/>
</dbReference>
<dbReference type="Pfam" id="PF00265">
    <property type="entry name" value="TK"/>
    <property type="match status" value="1"/>
</dbReference>
<dbReference type="PIRSF" id="PIRSF035805">
    <property type="entry name" value="TK_cell"/>
    <property type="match status" value="1"/>
</dbReference>
<dbReference type="SUPFAM" id="SSF57716">
    <property type="entry name" value="Glucocorticoid receptor-like (DNA-binding domain)"/>
    <property type="match status" value="1"/>
</dbReference>
<dbReference type="SUPFAM" id="SSF52540">
    <property type="entry name" value="P-loop containing nucleoside triphosphate hydrolases"/>
    <property type="match status" value="1"/>
</dbReference>
<dbReference type="PROSITE" id="PS00603">
    <property type="entry name" value="TK_CELLULAR_TYPE"/>
    <property type="match status" value="1"/>
</dbReference>
<protein>
    <recommendedName>
        <fullName evidence="1">Thymidine kinase</fullName>
        <ecNumber evidence="1">2.7.1.21</ecNumber>
    </recommendedName>
</protein>
<keyword id="KW-0067">ATP-binding</keyword>
<keyword id="KW-0963">Cytoplasm</keyword>
<keyword id="KW-0237">DNA synthesis</keyword>
<keyword id="KW-0418">Kinase</keyword>
<keyword id="KW-0479">Metal-binding</keyword>
<keyword id="KW-0547">Nucleotide-binding</keyword>
<keyword id="KW-1185">Reference proteome</keyword>
<keyword id="KW-0808">Transferase</keyword>
<keyword id="KW-0862">Zinc</keyword>
<sequence length="195" mass="21305">MHAITNSGWVEVITGSMFSGKTEELLRRLRRAEIAGQDVAAVTPAVDDRYGEATLGSHAGRSWAATVVEPTAEGVASIPTLLNGEQVVAIDEANFFPAELVDVCQELAADGRRVVLSGTDQTFRGEPFEPVPQLMAIAEYVDKMRAICMQCGEPATRNQRLIEGEPAHYDDPTVMVGAEETYEARCRNCHVVRRE</sequence>
<name>KITH_HALSA</name>
<feature type="chain" id="PRO_0000175054" description="Thymidine kinase">
    <location>
        <begin position="1"/>
        <end position="195"/>
    </location>
</feature>
<feature type="active site" description="Proton acceptor" evidence="1">
    <location>
        <position position="92"/>
    </location>
</feature>
<feature type="binding site" evidence="1">
    <location>
        <begin position="15"/>
        <end position="22"/>
    </location>
    <ligand>
        <name>ATP</name>
        <dbReference type="ChEBI" id="CHEBI:30616"/>
    </ligand>
</feature>
<feature type="binding site" evidence="1">
    <location>
        <begin position="91"/>
        <end position="94"/>
    </location>
    <ligand>
        <name>ATP</name>
        <dbReference type="ChEBI" id="CHEBI:30616"/>
    </ligand>
</feature>
<feature type="binding site" evidence="1">
    <location>
        <position position="148"/>
    </location>
    <ligand>
        <name>Zn(2+)</name>
        <dbReference type="ChEBI" id="CHEBI:29105"/>
    </ligand>
</feature>
<feature type="binding site" evidence="1">
    <location>
        <position position="151"/>
    </location>
    <ligand>
        <name>Zn(2+)</name>
        <dbReference type="ChEBI" id="CHEBI:29105"/>
    </ligand>
</feature>
<feature type="binding site" evidence="1">
    <location>
        <position position="186"/>
    </location>
    <ligand>
        <name>Zn(2+)</name>
        <dbReference type="ChEBI" id="CHEBI:29105"/>
    </ligand>
</feature>
<feature type="binding site" evidence="1">
    <location>
        <position position="189"/>
    </location>
    <ligand>
        <name>Zn(2+)</name>
        <dbReference type="ChEBI" id="CHEBI:29105"/>
    </ligand>
</feature>
<gene>
    <name evidence="1" type="primary">tdk</name>
    <name type="ordered locus">VNG_1515G</name>
</gene>
<reference key="1">
    <citation type="journal article" date="2000" name="Proc. Natl. Acad. Sci. U.S.A.">
        <title>Genome sequence of Halobacterium species NRC-1.</title>
        <authorList>
            <person name="Ng W.V."/>
            <person name="Kennedy S.P."/>
            <person name="Mahairas G.G."/>
            <person name="Berquist B."/>
            <person name="Pan M."/>
            <person name="Shukla H.D."/>
            <person name="Lasky S.R."/>
            <person name="Baliga N.S."/>
            <person name="Thorsson V."/>
            <person name="Sbrogna J."/>
            <person name="Swartzell S."/>
            <person name="Weir D."/>
            <person name="Hall J."/>
            <person name="Dahl T.A."/>
            <person name="Welti R."/>
            <person name="Goo Y.A."/>
            <person name="Leithauser B."/>
            <person name="Keller K."/>
            <person name="Cruz R."/>
            <person name="Danson M.J."/>
            <person name="Hough D.W."/>
            <person name="Maddocks D.G."/>
            <person name="Jablonski P.E."/>
            <person name="Krebs M.P."/>
            <person name="Angevine C.M."/>
            <person name="Dale H."/>
            <person name="Isenbarger T.A."/>
            <person name="Peck R.F."/>
            <person name="Pohlschroder M."/>
            <person name="Spudich J.L."/>
            <person name="Jung K.-H."/>
            <person name="Alam M."/>
            <person name="Freitas T."/>
            <person name="Hou S."/>
            <person name="Daniels C.J."/>
            <person name="Dennis P.P."/>
            <person name="Omer A.D."/>
            <person name="Ebhardt H."/>
            <person name="Lowe T.M."/>
            <person name="Liang P."/>
            <person name="Riley M."/>
            <person name="Hood L."/>
            <person name="DasSarma S."/>
        </authorList>
    </citation>
    <scope>NUCLEOTIDE SEQUENCE [LARGE SCALE GENOMIC DNA]</scope>
    <source>
        <strain>ATCC 700922 / JCM 11081 / NRC-1</strain>
    </source>
</reference>
<evidence type="ECO:0000255" key="1">
    <source>
        <dbReference type="HAMAP-Rule" id="MF_00124"/>
    </source>
</evidence>